<protein>
    <recommendedName>
        <fullName evidence="1">Large ribosomal subunit protein bL36B</fullName>
    </recommendedName>
    <alternativeName>
        <fullName evidence="2">50S ribosomal protein L36 2</fullName>
    </alternativeName>
</protein>
<proteinExistence type="inferred from homology"/>
<evidence type="ECO:0000255" key="1">
    <source>
        <dbReference type="HAMAP-Rule" id="MF_00251"/>
    </source>
</evidence>
<evidence type="ECO:0000305" key="2"/>
<reference key="1">
    <citation type="journal article" date="2001" name="Nature">
        <title>Complete genome sequence of a multiple drug resistant Salmonella enterica serovar Typhi CT18.</title>
        <authorList>
            <person name="Parkhill J."/>
            <person name="Dougan G."/>
            <person name="James K.D."/>
            <person name="Thomson N.R."/>
            <person name="Pickard D."/>
            <person name="Wain J."/>
            <person name="Churcher C.M."/>
            <person name="Mungall K.L."/>
            <person name="Bentley S.D."/>
            <person name="Holden M.T.G."/>
            <person name="Sebaihia M."/>
            <person name="Baker S."/>
            <person name="Basham D."/>
            <person name="Brooks K."/>
            <person name="Chillingworth T."/>
            <person name="Connerton P."/>
            <person name="Cronin A."/>
            <person name="Davis P."/>
            <person name="Davies R.M."/>
            <person name="Dowd L."/>
            <person name="White N."/>
            <person name="Farrar J."/>
            <person name="Feltwell T."/>
            <person name="Hamlin N."/>
            <person name="Haque A."/>
            <person name="Hien T.T."/>
            <person name="Holroyd S."/>
            <person name="Jagels K."/>
            <person name="Krogh A."/>
            <person name="Larsen T.S."/>
            <person name="Leather S."/>
            <person name="Moule S."/>
            <person name="O'Gaora P."/>
            <person name="Parry C."/>
            <person name="Quail M.A."/>
            <person name="Rutherford K.M."/>
            <person name="Simmonds M."/>
            <person name="Skelton J."/>
            <person name="Stevens K."/>
            <person name="Whitehead S."/>
            <person name="Barrell B.G."/>
        </authorList>
    </citation>
    <scope>NUCLEOTIDE SEQUENCE [LARGE SCALE GENOMIC DNA]</scope>
    <source>
        <strain>CT18</strain>
    </source>
</reference>
<reference key="2">
    <citation type="journal article" date="2003" name="J. Bacteriol.">
        <title>Comparative genomics of Salmonella enterica serovar Typhi strains Ty2 and CT18.</title>
        <authorList>
            <person name="Deng W."/>
            <person name="Liou S.-R."/>
            <person name="Plunkett G. III"/>
            <person name="Mayhew G.F."/>
            <person name="Rose D.J."/>
            <person name="Burland V."/>
            <person name="Kodoyianni V."/>
            <person name="Schwartz D.C."/>
            <person name="Blattner F.R."/>
        </authorList>
    </citation>
    <scope>NUCLEOTIDE SEQUENCE [LARGE SCALE GENOMIC DNA]</scope>
    <source>
        <strain>ATCC 700931 / Ty2</strain>
    </source>
</reference>
<comment type="similarity">
    <text evidence="1">Belongs to the bacterial ribosomal protein bL36 family.</text>
</comment>
<accession>P66297</accession>
<accession>Q8XF38</accession>
<dbReference type="EMBL" id="AL513382">
    <property type="protein sequence ID" value="CAD04955.1"/>
    <property type="molecule type" value="Genomic_DNA"/>
</dbReference>
<dbReference type="EMBL" id="AE014613">
    <property type="protein sequence ID" value="AAO69980.1"/>
    <property type="molecule type" value="Genomic_DNA"/>
</dbReference>
<dbReference type="RefSeq" id="NP_455067.1">
    <property type="nucleotide sequence ID" value="NC_003198.1"/>
</dbReference>
<dbReference type="SMR" id="P66297"/>
<dbReference type="STRING" id="220341.gene:17584535"/>
<dbReference type="KEGG" id="stt:t2390"/>
<dbReference type="KEGG" id="sty:STY0513"/>
<dbReference type="PATRIC" id="fig|220341.7.peg.516"/>
<dbReference type="eggNOG" id="COG0257">
    <property type="taxonomic scope" value="Bacteria"/>
</dbReference>
<dbReference type="HOGENOM" id="CLU_135723_3_1_6"/>
<dbReference type="OrthoDB" id="9801558at2"/>
<dbReference type="Proteomes" id="UP000000541">
    <property type="component" value="Chromosome"/>
</dbReference>
<dbReference type="Proteomes" id="UP000002670">
    <property type="component" value="Chromosome"/>
</dbReference>
<dbReference type="GO" id="GO:1990904">
    <property type="term" value="C:ribonucleoprotein complex"/>
    <property type="evidence" value="ECO:0007669"/>
    <property type="project" value="UniProtKB-KW"/>
</dbReference>
<dbReference type="GO" id="GO:0005840">
    <property type="term" value="C:ribosome"/>
    <property type="evidence" value="ECO:0007669"/>
    <property type="project" value="UniProtKB-KW"/>
</dbReference>
<dbReference type="GO" id="GO:0003735">
    <property type="term" value="F:structural constituent of ribosome"/>
    <property type="evidence" value="ECO:0007669"/>
    <property type="project" value="InterPro"/>
</dbReference>
<dbReference type="GO" id="GO:0006412">
    <property type="term" value="P:translation"/>
    <property type="evidence" value="ECO:0007669"/>
    <property type="project" value="UniProtKB-UniRule"/>
</dbReference>
<dbReference type="HAMAP" id="MF_00251">
    <property type="entry name" value="Ribosomal_bL36"/>
    <property type="match status" value="1"/>
</dbReference>
<dbReference type="InterPro" id="IPR000473">
    <property type="entry name" value="Ribosomal_bL36"/>
</dbReference>
<dbReference type="InterPro" id="IPR035977">
    <property type="entry name" value="Ribosomal_bL36_sp"/>
</dbReference>
<dbReference type="InterPro" id="IPR047621">
    <property type="entry name" value="Ribosomal_L36_bact"/>
</dbReference>
<dbReference type="NCBIfam" id="NF002021">
    <property type="entry name" value="PRK00831.1"/>
    <property type="match status" value="1"/>
</dbReference>
<dbReference type="NCBIfam" id="TIGR01022">
    <property type="entry name" value="rpmJ_bact"/>
    <property type="match status" value="1"/>
</dbReference>
<dbReference type="PANTHER" id="PTHR47781">
    <property type="entry name" value="50S RIBOSOMAL PROTEIN L36 2"/>
    <property type="match status" value="1"/>
</dbReference>
<dbReference type="PANTHER" id="PTHR47781:SF1">
    <property type="entry name" value="LARGE RIBOSOMAL SUBUNIT PROTEIN BL36B"/>
    <property type="match status" value="1"/>
</dbReference>
<dbReference type="Pfam" id="PF00444">
    <property type="entry name" value="Ribosomal_L36"/>
    <property type="match status" value="1"/>
</dbReference>
<dbReference type="SUPFAM" id="SSF57840">
    <property type="entry name" value="Ribosomal protein L36"/>
    <property type="match status" value="1"/>
</dbReference>
<dbReference type="PROSITE" id="PS00828">
    <property type="entry name" value="RIBOSOMAL_L36"/>
    <property type="match status" value="1"/>
</dbReference>
<sequence length="46" mass="5521">MQVLNSLRNAKQRHPDCQIVKRKGRLYVICKTNPRFKAVQGRKKRR</sequence>
<name>RL362_SALTI</name>
<organism>
    <name type="scientific">Salmonella typhi</name>
    <dbReference type="NCBI Taxonomy" id="90370"/>
    <lineage>
        <taxon>Bacteria</taxon>
        <taxon>Pseudomonadati</taxon>
        <taxon>Pseudomonadota</taxon>
        <taxon>Gammaproteobacteria</taxon>
        <taxon>Enterobacterales</taxon>
        <taxon>Enterobacteriaceae</taxon>
        <taxon>Salmonella</taxon>
    </lineage>
</organism>
<gene>
    <name evidence="1" type="primary">rpmJ2</name>
    <name type="synonym">rpmJ</name>
    <name type="ordered locus">STY0513</name>
    <name type="ordered locus">t2390</name>
</gene>
<keyword id="KW-0687">Ribonucleoprotein</keyword>
<keyword id="KW-0689">Ribosomal protein</keyword>
<feature type="chain" id="PRO_0000126252" description="Large ribosomal subunit protein bL36B">
    <location>
        <begin position="1"/>
        <end position="46"/>
    </location>
</feature>